<accession>Q07N65</accession>
<gene>
    <name evidence="1" type="primary">fbp</name>
    <name type="ordered locus">RPE_2682</name>
</gene>
<sequence length="344" mass="37103">MEHALTLSQHTREYAGTDPLRLAVAAAIDAIAEASIEMAELIGRGALAGITGEAQGSSNADGDVQKDLDVRCDEMILEALKKLPFAALASEESEALVYGDPMAPISVAFDPLDGSSNIDTNATVGTIFSIIPTIVGVAPFTAPGKVQLAAGFVVYGPQTSLVLTTGDGVDIFTLDRAAHVYKRIRHKVRIPTDTPEFAINASNHRHWEQPVRDFVEECLAGTEGPRSKDFNMRWLGSLVAEAYRILTRGGVFLYPGDGRPGYSEGRLRLLYECHPMAFIMEQAGGGASTGREHVLDLAARTIHQRAPLIMGSIDKVNRVELLHNDPDAASRSAPLFARRGLFRV</sequence>
<name>F16PA_RHOP5</name>
<keyword id="KW-0113">Calvin cycle</keyword>
<keyword id="KW-0119">Carbohydrate metabolism</keyword>
<keyword id="KW-0963">Cytoplasm</keyword>
<keyword id="KW-0378">Hydrolase</keyword>
<keyword id="KW-0460">Magnesium</keyword>
<keyword id="KW-0479">Metal-binding</keyword>
<protein>
    <recommendedName>
        <fullName evidence="1">Fructose-1,6-bisphosphatase class 1</fullName>
        <shortName evidence="1">FBPase class 1</shortName>
        <ecNumber evidence="1">3.1.3.11</ecNumber>
    </recommendedName>
    <alternativeName>
        <fullName evidence="1">D-fructose-1,6-bisphosphate 1-phosphohydrolase class 1</fullName>
    </alternativeName>
</protein>
<evidence type="ECO:0000255" key="1">
    <source>
        <dbReference type="HAMAP-Rule" id="MF_01855"/>
    </source>
</evidence>
<reference key="1">
    <citation type="submission" date="2006-09" db="EMBL/GenBank/DDBJ databases">
        <title>Complete sequence of Rhodopseudomonas palustris BisA53.</title>
        <authorList>
            <consortium name="US DOE Joint Genome Institute"/>
            <person name="Copeland A."/>
            <person name="Lucas S."/>
            <person name="Lapidus A."/>
            <person name="Barry K."/>
            <person name="Detter J.C."/>
            <person name="Glavina del Rio T."/>
            <person name="Hammon N."/>
            <person name="Israni S."/>
            <person name="Dalin E."/>
            <person name="Tice H."/>
            <person name="Pitluck S."/>
            <person name="Chain P."/>
            <person name="Malfatti S."/>
            <person name="Shin M."/>
            <person name="Vergez L."/>
            <person name="Schmutz J."/>
            <person name="Larimer F."/>
            <person name="Land M."/>
            <person name="Hauser L."/>
            <person name="Pelletier D.A."/>
            <person name="Kyrpides N."/>
            <person name="Kim E."/>
            <person name="Harwood C.S."/>
            <person name="Oda Y."/>
            <person name="Richardson P."/>
        </authorList>
    </citation>
    <scope>NUCLEOTIDE SEQUENCE [LARGE SCALE GENOMIC DNA]</scope>
    <source>
        <strain>BisA53</strain>
    </source>
</reference>
<feature type="chain" id="PRO_0000364675" description="Fructose-1,6-bisphosphatase class 1">
    <location>
        <begin position="1"/>
        <end position="344"/>
    </location>
</feature>
<feature type="binding site" evidence="1">
    <location>
        <position position="91"/>
    </location>
    <ligand>
        <name>Mg(2+)</name>
        <dbReference type="ChEBI" id="CHEBI:18420"/>
        <label>1</label>
    </ligand>
</feature>
<feature type="binding site" evidence="1">
    <location>
        <position position="110"/>
    </location>
    <ligand>
        <name>Mg(2+)</name>
        <dbReference type="ChEBI" id="CHEBI:18420"/>
        <label>1</label>
    </ligand>
</feature>
<feature type="binding site" evidence="1">
    <location>
        <position position="110"/>
    </location>
    <ligand>
        <name>Mg(2+)</name>
        <dbReference type="ChEBI" id="CHEBI:18420"/>
        <label>2</label>
    </ligand>
</feature>
<feature type="binding site" evidence="1">
    <location>
        <position position="112"/>
    </location>
    <ligand>
        <name>Mg(2+)</name>
        <dbReference type="ChEBI" id="CHEBI:18420"/>
        <label>1</label>
    </ligand>
</feature>
<feature type="binding site" evidence="1">
    <location>
        <begin position="113"/>
        <end position="116"/>
    </location>
    <ligand>
        <name>substrate</name>
    </ligand>
</feature>
<feature type="binding site" evidence="1">
    <location>
        <position position="113"/>
    </location>
    <ligand>
        <name>Mg(2+)</name>
        <dbReference type="ChEBI" id="CHEBI:18420"/>
        <label>2</label>
    </ligand>
</feature>
<feature type="binding site" evidence="1">
    <location>
        <position position="200"/>
    </location>
    <ligand>
        <name>substrate</name>
    </ligand>
</feature>
<feature type="binding site" evidence="1">
    <location>
        <position position="272"/>
    </location>
    <ligand>
        <name>Mg(2+)</name>
        <dbReference type="ChEBI" id="CHEBI:18420"/>
        <label>2</label>
    </ligand>
</feature>
<comment type="catalytic activity">
    <reaction evidence="1">
        <text>beta-D-fructose 1,6-bisphosphate + H2O = beta-D-fructose 6-phosphate + phosphate</text>
        <dbReference type="Rhea" id="RHEA:11064"/>
        <dbReference type="ChEBI" id="CHEBI:15377"/>
        <dbReference type="ChEBI" id="CHEBI:32966"/>
        <dbReference type="ChEBI" id="CHEBI:43474"/>
        <dbReference type="ChEBI" id="CHEBI:57634"/>
        <dbReference type="EC" id="3.1.3.11"/>
    </reaction>
</comment>
<comment type="cofactor">
    <cofactor evidence="1">
        <name>Mg(2+)</name>
        <dbReference type="ChEBI" id="CHEBI:18420"/>
    </cofactor>
    <text evidence="1">Binds 2 magnesium ions per subunit.</text>
</comment>
<comment type="pathway">
    <text evidence="1">Carbohydrate biosynthesis; Calvin cycle.</text>
</comment>
<comment type="subunit">
    <text evidence="1">Homotetramer.</text>
</comment>
<comment type="subcellular location">
    <subcellularLocation>
        <location evidence="1">Cytoplasm</location>
    </subcellularLocation>
</comment>
<comment type="similarity">
    <text evidence="1">Belongs to the FBPase class 1 family.</text>
</comment>
<proteinExistence type="inferred from homology"/>
<dbReference type="EC" id="3.1.3.11" evidence="1"/>
<dbReference type="EMBL" id="CP000463">
    <property type="protein sequence ID" value="ABJ06619.1"/>
    <property type="molecule type" value="Genomic_DNA"/>
</dbReference>
<dbReference type="SMR" id="Q07N65"/>
<dbReference type="STRING" id="316055.RPE_2682"/>
<dbReference type="KEGG" id="rpe:RPE_2682"/>
<dbReference type="eggNOG" id="COG0158">
    <property type="taxonomic scope" value="Bacteria"/>
</dbReference>
<dbReference type="HOGENOM" id="CLU_039977_0_0_5"/>
<dbReference type="OrthoDB" id="9806756at2"/>
<dbReference type="UniPathway" id="UPA00116"/>
<dbReference type="GO" id="GO:0005829">
    <property type="term" value="C:cytosol"/>
    <property type="evidence" value="ECO:0007669"/>
    <property type="project" value="TreeGrafter"/>
</dbReference>
<dbReference type="GO" id="GO:0042132">
    <property type="term" value="F:fructose 1,6-bisphosphate 1-phosphatase activity"/>
    <property type="evidence" value="ECO:0007669"/>
    <property type="project" value="UniProtKB-UniRule"/>
</dbReference>
<dbReference type="GO" id="GO:0000287">
    <property type="term" value="F:magnesium ion binding"/>
    <property type="evidence" value="ECO:0007669"/>
    <property type="project" value="UniProtKB-UniRule"/>
</dbReference>
<dbReference type="GO" id="GO:0030388">
    <property type="term" value="P:fructose 1,6-bisphosphate metabolic process"/>
    <property type="evidence" value="ECO:0007669"/>
    <property type="project" value="TreeGrafter"/>
</dbReference>
<dbReference type="GO" id="GO:0006002">
    <property type="term" value="P:fructose 6-phosphate metabolic process"/>
    <property type="evidence" value="ECO:0007669"/>
    <property type="project" value="TreeGrafter"/>
</dbReference>
<dbReference type="GO" id="GO:0006000">
    <property type="term" value="P:fructose metabolic process"/>
    <property type="evidence" value="ECO:0007669"/>
    <property type="project" value="TreeGrafter"/>
</dbReference>
<dbReference type="GO" id="GO:0006094">
    <property type="term" value="P:gluconeogenesis"/>
    <property type="evidence" value="ECO:0007669"/>
    <property type="project" value="UniProtKB-UniRule"/>
</dbReference>
<dbReference type="GO" id="GO:0019253">
    <property type="term" value="P:reductive pentose-phosphate cycle"/>
    <property type="evidence" value="ECO:0007669"/>
    <property type="project" value="UniProtKB-UniPathway"/>
</dbReference>
<dbReference type="GO" id="GO:0005986">
    <property type="term" value="P:sucrose biosynthetic process"/>
    <property type="evidence" value="ECO:0007669"/>
    <property type="project" value="TreeGrafter"/>
</dbReference>
<dbReference type="CDD" id="cd00354">
    <property type="entry name" value="FBPase"/>
    <property type="match status" value="1"/>
</dbReference>
<dbReference type="FunFam" id="3.40.190.80:FF:000011">
    <property type="entry name" value="Fructose-1,6-bisphosphatase class 1"/>
    <property type="match status" value="1"/>
</dbReference>
<dbReference type="Gene3D" id="3.40.190.80">
    <property type="match status" value="1"/>
</dbReference>
<dbReference type="Gene3D" id="3.30.540.10">
    <property type="entry name" value="Fructose-1,6-Bisphosphatase, subunit A, domain 1"/>
    <property type="match status" value="1"/>
</dbReference>
<dbReference type="HAMAP" id="MF_01855">
    <property type="entry name" value="FBPase_class1"/>
    <property type="match status" value="1"/>
</dbReference>
<dbReference type="InterPro" id="IPR044015">
    <property type="entry name" value="FBPase_C_dom"/>
</dbReference>
<dbReference type="InterPro" id="IPR000146">
    <property type="entry name" value="FBPase_class-1"/>
</dbReference>
<dbReference type="InterPro" id="IPR033391">
    <property type="entry name" value="FBPase_N"/>
</dbReference>
<dbReference type="InterPro" id="IPR028343">
    <property type="entry name" value="FBPtase"/>
</dbReference>
<dbReference type="InterPro" id="IPR020548">
    <property type="entry name" value="Fructose_bisphosphatase_AS"/>
</dbReference>
<dbReference type="NCBIfam" id="NF006779">
    <property type="entry name" value="PRK09293.1-3"/>
    <property type="match status" value="1"/>
</dbReference>
<dbReference type="NCBIfam" id="NF006780">
    <property type="entry name" value="PRK09293.1-4"/>
    <property type="match status" value="1"/>
</dbReference>
<dbReference type="PANTHER" id="PTHR11556">
    <property type="entry name" value="FRUCTOSE-1,6-BISPHOSPHATASE-RELATED"/>
    <property type="match status" value="1"/>
</dbReference>
<dbReference type="PANTHER" id="PTHR11556:SF35">
    <property type="entry name" value="SEDOHEPTULOSE-1,7-BISPHOSPHATASE, CHLOROPLASTIC"/>
    <property type="match status" value="1"/>
</dbReference>
<dbReference type="Pfam" id="PF00316">
    <property type="entry name" value="FBPase"/>
    <property type="match status" value="1"/>
</dbReference>
<dbReference type="Pfam" id="PF18913">
    <property type="entry name" value="FBPase_C"/>
    <property type="match status" value="1"/>
</dbReference>
<dbReference type="PIRSF" id="PIRSF500210">
    <property type="entry name" value="FBPtase"/>
    <property type="match status" value="1"/>
</dbReference>
<dbReference type="PIRSF" id="PIRSF000904">
    <property type="entry name" value="FBPtase_SBPase"/>
    <property type="match status" value="1"/>
</dbReference>
<dbReference type="PRINTS" id="PR00115">
    <property type="entry name" value="F16BPHPHTASE"/>
</dbReference>
<dbReference type="SUPFAM" id="SSF56655">
    <property type="entry name" value="Carbohydrate phosphatase"/>
    <property type="match status" value="1"/>
</dbReference>
<dbReference type="PROSITE" id="PS00124">
    <property type="entry name" value="FBPASE"/>
    <property type="match status" value="1"/>
</dbReference>
<organism>
    <name type="scientific">Rhodopseudomonas palustris (strain BisA53)</name>
    <dbReference type="NCBI Taxonomy" id="316055"/>
    <lineage>
        <taxon>Bacteria</taxon>
        <taxon>Pseudomonadati</taxon>
        <taxon>Pseudomonadota</taxon>
        <taxon>Alphaproteobacteria</taxon>
        <taxon>Hyphomicrobiales</taxon>
        <taxon>Nitrobacteraceae</taxon>
        <taxon>Rhodopseudomonas</taxon>
    </lineage>
</organism>